<keyword id="KW-0050">Antiport</keyword>
<keyword id="KW-1003">Cell membrane</keyword>
<keyword id="KW-0375">Hydrogen ion transport</keyword>
<keyword id="KW-0406">Ion transport</keyword>
<keyword id="KW-0472">Membrane</keyword>
<keyword id="KW-0915">Sodium</keyword>
<keyword id="KW-0739">Sodium transport</keyword>
<keyword id="KW-0812">Transmembrane</keyword>
<keyword id="KW-1133">Transmembrane helix</keyword>
<keyword id="KW-0813">Transport</keyword>
<comment type="function">
    <text evidence="1">Mnh complex is a Na(+)/H(+) antiporter involved in Na(+) excretion.</text>
</comment>
<comment type="subunit">
    <text evidence="1">May form a heterooligomeric complex that consists of seven subunits: mnhA1, mnhB1, mnhC1, mnhD1, mnhE1, mnhF1 and mnhG1.</text>
</comment>
<comment type="subcellular location">
    <subcellularLocation>
        <location evidence="3">Cell membrane</location>
        <topology evidence="3">Multi-pass membrane protein</topology>
    </subcellularLocation>
</comment>
<comment type="similarity">
    <text evidence="3">Belongs to the CPA3 antiporters (TC 2.A.63) subunit G family.</text>
</comment>
<protein>
    <recommendedName>
        <fullName>Na(+)/H(+) antiporter subunit G1</fullName>
    </recommendedName>
    <alternativeName>
        <fullName>Mnh complex subunit G1</fullName>
    </alternativeName>
</protein>
<evidence type="ECO:0000250" key="1"/>
<evidence type="ECO:0000255" key="2"/>
<evidence type="ECO:0000305" key="3"/>
<name>MNHG1_STAAS</name>
<accession>Q6GAY0</accession>
<organism>
    <name type="scientific">Staphylococcus aureus (strain MSSA476)</name>
    <dbReference type="NCBI Taxonomy" id="282459"/>
    <lineage>
        <taxon>Bacteria</taxon>
        <taxon>Bacillati</taxon>
        <taxon>Bacillota</taxon>
        <taxon>Bacilli</taxon>
        <taxon>Bacillales</taxon>
        <taxon>Staphylococcaceae</taxon>
        <taxon>Staphylococcus</taxon>
    </lineage>
</organism>
<reference key="1">
    <citation type="journal article" date="2004" name="Proc. Natl. Acad. Sci. U.S.A.">
        <title>Complete genomes of two clinical Staphylococcus aureus strains: evidence for the rapid evolution of virulence and drug resistance.</title>
        <authorList>
            <person name="Holden M.T.G."/>
            <person name="Feil E.J."/>
            <person name="Lindsay J.A."/>
            <person name="Peacock S.J."/>
            <person name="Day N.P.J."/>
            <person name="Enright M.C."/>
            <person name="Foster T.J."/>
            <person name="Moore C.E."/>
            <person name="Hurst L."/>
            <person name="Atkin R."/>
            <person name="Barron A."/>
            <person name="Bason N."/>
            <person name="Bentley S.D."/>
            <person name="Chillingworth C."/>
            <person name="Chillingworth T."/>
            <person name="Churcher C."/>
            <person name="Clark L."/>
            <person name="Corton C."/>
            <person name="Cronin A."/>
            <person name="Doggett J."/>
            <person name="Dowd L."/>
            <person name="Feltwell T."/>
            <person name="Hance Z."/>
            <person name="Harris B."/>
            <person name="Hauser H."/>
            <person name="Holroyd S."/>
            <person name="Jagels K."/>
            <person name="James K.D."/>
            <person name="Lennard N."/>
            <person name="Line A."/>
            <person name="Mayes R."/>
            <person name="Moule S."/>
            <person name="Mungall K."/>
            <person name="Ormond D."/>
            <person name="Quail M.A."/>
            <person name="Rabbinowitsch E."/>
            <person name="Rutherford K.M."/>
            <person name="Sanders M."/>
            <person name="Sharp S."/>
            <person name="Simmonds M."/>
            <person name="Stevens K."/>
            <person name="Whitehead S."/>
            <person name="Barrell B.G."/>
            <person name="Spratt B.G."/>
            <person name="Parkhill J."/>
        </authorList>
    </citation>
    <scope>NUCLEOTIDE SEQUENCE [LARGE SCALE GENOMIC DNA]</scope>
    <source>
        <strain>MSSA476</strain>
    </source>
</reference>
<sequence length="118" mass="12819">MIKIILISLALIFVIIGALISALAAIGLLRLEDVYSRAHAAGKASTLGAMSLLFGTFLYFIATQGFVNMQLIVAIIFVLITGPLSSHMIMKAAYNIKTPYTKKTKVDEISEDLKDTKL</sequence>
<dbReference type="EMBL" id="BX571857">
    <property type="protein sequence ID" value="CAG42591.1"/>
    <property type="molecule type" value="Genomic_DNA"/>
</dbReference>
<dbReference type="RefSeq" id="WP_000590451.1">
    <property type="nucleotide sequence ID" value="NC_002953.3"/>
</dbReference>
<dbReference type="SMR" id="Q6GAY0"/>
<dbReference type="GeneID" id="98345267"/>
<dbReference type="KEGG" id="sas:SAS0816"/>
<dbReference type="HOGENOM" id="CLU_121334_0_3_9"/>
<dbReference type="GO" id="GO:0005886">
    <property type="term" value="C:plasma membrane"/>
    <property type="evidence" value="ECO:0007669"/>
    <property type="project" value="UniProtKB-SubCell"/>
</dbReference>
<dbReference type="GO" id="GO:0015385">
    <property type="term" value="F:sodium:proton antiporter activity"/>
    <property type="evidence" value="ECO:0007669"/>
    <property type="project" value="TreeGrafter"/>
</dbReference>
<dbReference type="InterPro" id="IPR005133">
    <property type="entry name" value="PhaG_MnhG_YufB"/>
</dbReference>
<dbReference type="NCBIfam" id="TIGR01300">
    <property type="entry name" value="CPA3_mnhG_phaG"/>
    <property type="match status" value="1"/>
</dbReference>
<dbReference type="NCBIfam" id="NF009237">
    <property type="entry name" value="PRK12587.1"/>
    <property type="match status" value="1"/>
</dbReference>
<dbReference type="NCBIfam" id="NF009314">
    <property type="entry name" value="PRK12674.1-2"/>
    <property type="match status" value="1"/>
</dbReference>
<dbReference type="PANTHER" id="PTHR34703">
    <property type="entry name" value="ANTIPORTER SUBUNIT MNHG2-RELATED"/>
    <property type="match status" value="1"/>
</dbReference>
<dbReference type="PANTHER" id="PTHR34703:SF1">
    <property type="entry name" value="ANTIPORTER SUBUNIT MNHG2-RELATED"/>
    <property type="match status" value="1"/>
</dbReference>
<dbReference type="Pfam" id="PF03334">
    <property type="entry name" value="PhaG_MnhG_YufB"/>
    <property type="match status" value="1"/>
</dbReference>
<proteinExistence type="inferred from homology"/>
<gene>
    <name type="primary">mnhG1</name>
    <name type="ordered locus">SAS0816</name>
</gene>
<feature type="chain" id="PRO_0000086860" description="Na(+)/H(+) antiporter subunit G1">
    <location>
        <begin position="1"/>
        <end position="118"/>
    </location>
</feature>
<feature type="transmembrane region" description="Helical" evidence="2">
    <location>
        <begin position="7"/>
        <end position="29"/>
    </location>
</feature>
<feature type="transmembrane region" description="Helical" evidence="2">
    <location>
        <begin position="44"/>
        <end position="66"/>
    </location>
</feature>
<feature type="transmembrane region" description="Helical" evidence="2">
    <location>
        <begin position="71"/>
        <end position="90"/>
    </location>
</feature>